<name>SYA_PARM1</name>
<sequence length="878" mass="94412">MQTANEIRRTFLDFFEKNGHTVVNSSPLVPRNDPTLMFTNAGMVQFKNVFTGIEKRDYVRAASSQKCVRAGGKHNDLDNVGYTARHHTFFEMLGNFSFGDYFKDLAIEHAWNLITKDFGIDKSRLLVTVYHDDDQAADAWKKIAGLPESRIIRIPTSDNFWAMGDTGPCGPCSEIFYDHGEHIFGGPPGSPDQDGDRFIEIWNLVFMQFEQVDKETRIPLPKPSIDTGMGLERLAALLQGKHDNYDVDLLRALIEASAEASNTDPDGPHKVSHRVVADHLRSSSFLIADGVLPSNEGRGYVLRRIMRRAMRHAHLMGCTEPLLHKLVPALTRQMGEAYPELVRANALITETLKLEETRFKVTLDKGLKLLDDEITRIGSGQKLAGEVAFKLYDTYGFPLDLTQDALKAKGIGVDTDGFASAMERQRAEARKAWAGSGDTATETVWFELREKLGASEFLGYDAEQAEGKIVALVENGKVVEAVHPGHQVAVIANQTPFYGESGGQMGDTGVITLGTPGTGGKATIAVTDTQKKLGDLIVHFGTVEGGPVAVGEDAHFAVESTRRDATRGHHSATHLLHAALRDILGDHVTQKGSQVGPDRLRFDFAHTKALSAEETRAVEAEVNRRIRLNAEVATKVMTPDDAIKAGAMALFGEKYGEEVRVVSMGDLSTELCGGTHANRTGDIGGFKIVAESAVASGVRRIEAVTGPAFLAWAQAQEDLLAKAADTLKAAPADLPARIAGLMDDRRKLERELAEVRKQLATGGGQGAATKTVNGITYAGKVLSGVPAKDLKGMADEIKKQIGSGIIALVSDADGKASIVVCVTEDLTSKHSAVDLVRIGSEALGGKGGGGRPDMAQAGGPDASAAQAAVDRIEQALGG</sequence>
<reference key="1">
    <citation type="journal article" date="2005" name="DNA Res.">
        <title>Complete genome sequence of the facultative anaerobic magnetotactic bacterium Magnetospirillum sp. strain AMB-1.</title>
        <authorList>
            <person name="Matsunaga T."/>
            <person name="Okamura Y."/>
            <person name="Fukuda Y."/>
            <person name="Wahyudi A.T."/>
            <person name="Murase Y."/>
            <person name="Takeyama H."/>
        </authorList>
    </citation>
    <scope>NUCLEOTIDE SEQUENCE [LARGE SCALE GENOMIC DNA]</scope>
    <source>
        <strain>ATCC 700264 / AMB-1</strain>
    </source>
</reference>
<organism>
    <name type="scientific">Paramagnetospirillum magneticum (strain ATCC 700264 / AMB-1)</name>
    <name type="common">Magnetospirillum magneticum</name>
    <dbReference type="NCBI Taxonomy" id="342108"/>
    <lineage>
        <taxon>Bacteria</taxon>
        <taxon>Pseudomonadati</taxon>
        <taxon>Pseudomonadota</taxon>
        <taxon>Alphaproteobacteria</taxon>
        <taxon>Rhodospirillales</taxon>
        <taxon>Magnetospirillaceae</taxon>
        <taxon>Paramagnetospirillum</taxon>
    </lineage>
</organism>
<proteinExistence type="inferred from homology"/>
<protein>
    <recommendedName>
        <fullName evidence="1">Alanine--tRNA ligase</fullName>
        <ecNumber evidence="1">6.1.1.7</ecNumber>
    </recommendedName>
    <alternativeName>
        <fullName evidence="1">Alanyl-tRNA synthetase</fullName>
        <shortName evidence="1">AlaRS</shortName>
    </alternativeName>
</protein>
<gene>
    <name evidence="1" type="primary">alaS</name>
    <name type="ordered locus">amb3532</name>
</gene>
<evidence type="ECO:0000255" key="1">
    <source>
        <dbReference type="HAMAP-Rule" id="MF_00036"/>
    </source>
</evidence>
<evidence type="ECO:0000256" key="2">
    <source>
        <dbReference type="SAM" id="MobiDB-lite"/>
    </source>
</evidence>
<comment type="function">
    <text evidence="1">Catalyzes the attachment of alanine to tRNA(Ala) in a two-step reaction: alanine is first activated by ATP to form Ala-AMP and then transferred to the acceptor end of tRNA(Ala). Also edits incorrectly charged Ser-tRNA(Ala) and Gly-tRNA(Ala) via its editing domain.</text>
</comment>
<comment type="catalytic activity">
    <reaction evidence="1">
        <text>tRNA(Ala) + L-alanine + ATP = L-alanyl-tRNA(Ala) + AMP + diphosphate</text>
        <dbReference type="Rhea" id="RHEA:12540"/>
        <dbReference type="Rhea" id="RHEA-COMP:9657"/>
        <dbReference type="Rhea" id="RHEA-COMP:9923"/>
        <dbReference type="ChEBI" id="CHEBI:30616"/>
        <dbReference type="ChEBI" id="CHEBI:33019"/>
        <dbReference type="ChEBI" id="CHEBI:57972"/>
        <dbReference type="ChEBI" id="CHEBI:78442"/>
        <dbReference type="ChEBI" id="CHEBI:78497"/>
        <dbReference type="ChEBI" id="CHEBI:456215"/>
        <dbReference type="EC" id="6.1.1.7"/>
    </reaction>
</comment>
<comment type="cofactor">
    <cofactor evidence="1">
        <name>Zn(2+)</name>
        <dbReference type="ChEBI" id="CHEBI:29105"/>
    </cofactor>
    <text evidence="1">Binds 1 zinc ion per subunit.</text>
</comment>
<comment type="subcellular location">
    <subcellularLocation>
        <location evidence="1">Cytoplasm</location>
    </subcellularLocation>
</comment>
<comment type="domain">
    <text evidence="1">Consists of three domains; the N-terminal catalytic domain, the editing domain and the C-terminal C-Ala domain. The editing domain removes incorrectly charged amino acids, while the C-Ala domain, along with tRNA(Ala), serves as a bridge to cooperatively bring together the editing and aminoacylation centers thus stimulating deacylation of misacylated tRNAs.</text>
</comment>
<comment type="similarity">
    <text evidence="1">Belongs to the class-II aminoacyl-tRNA synthetase family.</text>
</comment>
<keyword id="KW-0030">Aminoacyl-tRNA synthetase</keyword>
<keyword id="KW-0067">ATP-binding</keyword>
<keyword id="KW-0963">Cytoplasm</keyword>
<keyword id="KW-0436">Ligase</keyword>
<keyword id="KW-0479">Metal-binding</keyword>
<keyword id="KW-0547">Nucleotide-binding</keyword>
<keyword id="KW-0648">Protein biosynthesis</keyword>
<keyword id="KW-0694">RNA-binding</keyword>
<keyword id="KW-0820">tRNA-binding</keyword>
<keyword id="KW-0862">Zinc</keyword>
<dbReference type="EC" id="6.1.1.7" evidence="1"/>
<dbReference type="EMBL" id="AP007255">
    <property type="protein sequence ID" value="BAE52336.1"/>
    <property type="molecule type" value="Genomic_DNA"/>
</dbReference>
<dbReference type="RefSeq" id="WP_011385891.1">
    <property type="nucleotide sequence ID" value="NC_007626.1"/>
</dbReference>
<dbReference type="SMR" id="Q2W1D9"/>
<dbReference type="STRING" id="342108.amb3532"/>
<dbReference type="KEGG" id="mag:amb3532"/>
<dbReference type="HOGENOM" id="CLU_004485_1_1_5"/>
<dbReference type="OrthoDB" id="9803884at2"/>
<dbReference type="Proteomes" id="UP000007058">
    <property type="component" value="Chromosome"/>
</dbReference>
<dbReference type="GO" id="GO:0005829">
    <property type="term" value="C:cytosol"/>
    <property type="evidence" value="ECO:0007669"/>
    <property type="project" value="TreeGrafter"/>
</dbReference>
<dbReference type="GO" id="GO:0004813">
    <property type="term" value="F:alanine-tRNA ligase activity"/>
    <property type="evidence" value="ECO:0007669"/>
    <property type="project" value="UniProtKB-UniRule"/>
</dbReference>
<dbReference type="GO" id="GO:0002161">
    <property type="term" value="F:aminoacyl-tRNA deacylase activity"/>
    <property type="evidence" value="ECO:0007669"/>
    <property type="project" value="TreeGrafter"/>
</dbReference>
<dbReference type="GO" id="GO:0005524">
    <property type="term" value="F:ATP binding"/>
    <property type="evidence" value="ECO:0007669"/>
    <property type="project" value="UniProtKB-UniRule"/>
</dbReference>
<dbReference type="GO" id="GO:0000049">
    <property type="term" value="F:tRNA binding"/>
    <property type="evidence" value="ECO:0007669"/>
    <property type="project" value="UniProtKB-KW"/>
</dbReference>
<dbReference type="GO" id="GO:0008270">
    <property type="term" value="F:zinc ion binding"/>
    <property type="evidence" value="ECO:0007669"/>
    <property type="project" value="UniProtKB-UniRule"/>
</dbReference>
<dbReference type="GO" id="GO:0006419">
    <property type="term" value="P:alanyl-tRNA aminoacylation"/>
    <property type="evidence" value="ECO:0007669"/>
    <property type="project" value="UniProtKB-UniRule"/>
</dbReference>
<dbReference type="GO" id="GO:0045892">
    <property type="term" value="P:negative regulation of DNA-templated transcription"/>
    <property type="evidence" value="ECO:0007669"/>
    <property type="project" value="TreeGrafter"/>
</dbReference>
<dbReference type="CDD" id="cd00673">
    <property type="entry name" value="AlaRS_core"/>
    <property type="match status" value="1"/>
</dbReference>
<dbReference type="FunFam" id="3.10.310.40:FF:000001">
    <property type="entry name" value="Alanine--tRNA ligase"/>
    <property type="match status" value="1"/>
</dbReference>
<dbReference type="FunFam" id="3.30.54.20:FF:000001">
    <property type="entry name" value="Alanine--tRNA ligase"/>
    <property type="match status" value="1"/>
</dbReference>
<dbReference type="FunFam" id="3.30.930.10:FF:000004">
    <property type="entry name" value="Alanine--tRNA ligase"/>
    <property type="match status" value="1"/>
</dbReference>
<dbReference type="FunFam" id="3.30.980.10:FF:000004">
    <property type="entry name" value="Alanine--tRNA ligase, cytoplasmic"/>
    <property type="match status" value="1"/>
</dbReference>
<dbReference type="Gene3D" id="2.40.30.130">
    <property type="match status" value="1"/>
</dbReference>
<dbReference type="Gene3D" id="3.10.310.40">
    <property type="match status" value="1"/>
</dbReference>
<dbReference type="Gene3D" id="3.30.54.20">
    <property type="match status" value="1"/>
</dbReference>
<dbReference type="Gene3D" id="6.10.250.550">
    <property type="match status" value="1"/>
</dbReference>
<dbReference type="Gene3D" id="3.30.930.10">
    <property type="entry name" value="Bira Bifunctional Protein, Domain 2"/>
    <property type="match status" value="1"/>
</dbReference>
<dbReference type="Gene3D" id="3.30.980.10">
    <property type="entry name" value="Threonyl-trna Synthetase, Chain A, domain 2"/>
    <property type="match status" value="1"/>
</dbReference>
<dbReference type="HAMAP" id="MF_00036_B">
    <property type="entry name" value="Ala_tRNA_synth_B"/>
    <property type="match status" value="1"/>
</dbReference>
<dbReference type="InterPro" id="IPR045864">
    <property type="entry name" value="aa-tRNA-synth_II/BPL/LPL"/>
</dbReference>
<dbReference type="InterPro" id="IPR002318">
    <property type="entry name" value="Ala-tRNA-lgiase_IIc"/>
</dbReference>
<dbReference type="InterPro" id="IPR018162">
    <property type="entry name" value="Ala-tRNA-ligase_IIc_anticod-bd"/>
</dbReference>
<dbReference type="InterPro" id="IPR018165">
    <property type="entry name" value="Ala-tRNA-synth_IIc_core"/>
</dbReference>
<dbReference type="InterPro" id="IPR018164">
    <property type="entry name" value="Ala-tRNA-synth_IIc_N"/>
</dbReference>
<dbReference type="InterPro" id="IPR050058">
    <property type="entry name" value="Ala-tRNA_ligase"/>
</dbReference>
<dbReference type="InterPro" id="IPR023033">
    <property type="entry name" value="Ala_tRNA_ligase_euk/bac"/>
</dbReference>
<dbReference type="InterPro" id="IPR003156">
    <property type="entry name" value="DHHA1_dom"/>
</dbReference>
<dbReference type="InterPro" id="IPR018163">
    <property type="entry name" value="Thr/Ala-tRNA-synth_IIc_edit"/>
</dbReference>
<dbReference type="InterPro" id="IPR009000">
    <property type="entry name" value="Transl_B-barrel_sf"/>
</dbReference>
<dbReference type="InterPro" id="IPR012947">
    <property type="entry name" value="tRNA_SAD"/>
</dbReference>
<dbReference type="NCBIfam" id="TIGR00344">
    <property type="entry name" value="alaS"/>
    <property type="match status" value="1"/>
</dbReference>
<dbReference type="PANTHER" id="PTHR11777:SF9">
    <property type="entry name" value="ALANINE--TRNA LIGASE, CYTOPLASMIC"/>
    <property type="match status" value="1"/>
</dbReference>
<dbReference type="PANTHER" id="PTHR11777">
    <property type="entry name" value="ALANYL-TRNA SYNTHETASE"/>
    <property type="match status" value="1"/>
</dbReference>
<dbReference type="Pfam" id="PF02272">
    <property type="entry name" value="DHHA1"/>
    <property type="match status" value="1"/>
</dbReference>
<dbReference type="Pfam" id="PF01411">
    <property type="entry name" value="tRNA-synt_2c"/>
    <property type="match status" value="1"/>
</dbReference>
<dbReference type="Pfam" id="PF07973">
    <property type="entry name" value="tRNA_SAD"/>
    <property type="match status" value="1"/>
</dbReference>
<dbReference type="PRINTS" id="PR00980">
    <property type="entry name" value="TRNASYNTHALA"/>
</dbReference>
<dbReference type="SMART" id="SM00863">
    <property type="entry name" value="tRNA_SAD"/>
    <property type="match status" value="1"/>
</dbReference>
<dbReference type="SUPFAM" id="SSF55681">
    <property type="entry name" value="Class II aaRS and biotin synthetases"/>
    <property type="match status" value="1"/>
</dbReference>
<dbReference type="SUPFAM" id="SSF101353">
    <property type="entry name" value="Putative anticodon-binding domain of alanyl-tRNA synthetase (AlaRS)"/>
    <property type="match status" value="1"/>
</dbReference>
<dbReference type="SUPFAM" id="SSF55186">
    <property type="entry name" value="ThrRS/AlaRS common domain"/>
    <property type="match status" value="1"/>
</dbReference>
<dbReference type="SUPFAM" id="SSF50447">
    <property type="entry name" value="Translation proteins"/>
    <property type="match status" value="1"/>
</dbReference>
<dbReference type="PROSITE" id="PS50860">
    <property type="entry name" value="AA_TRNA_LIGASE_II_ALA"/>
    <property type="match status" value="1"/>
</dbReference>
<feature type="chain" id="PRO_0000347665" description="Alanine--tRNA ligase">
    <location>
        <begin position="1"/>
        <end position="878"/>
    </location>
</feature>
<feature type="region of interest" description="Disordered" evidence="2">
    <location>
        <begin position="844"/>
        <end position="864"/>
    </location>
</feature>
<feature type="compositionally biased region" description="Low complexity" evidence="2">
    <location>
        <begin position="855"/>
        <end position="864"/>
    </location>
</feature>
<feature type="binding site" evidence="1">
    <location>
        <position position="570"/>
    </location>
    <ligand>
        <name>Zn(2+)</name>
        <dbReference type="ChEBI" id="CHEBI:29105"/>
    </ligand>
</feature>
<feature type="binding site" evidence="1">
    <location>
        <position position="574"/>
    </location>
    <ligand>
        <name>Zn(2+)</name>
        <dbReference type="ChEBI" id="CHEBI:29105"/>
    </ligand>
</feature>
<feature type="binding site" evidence="1">
    <location>
        <position position="672"/>
    </location>
    <ligand>
        <name>Zn(2+)</name>
        <dbReference type="ChEBI" id="CHEBI:29105"/>
    </ligand>
</feature>
<feature type="binding site" evidence="1">
    <location>
        <position position="676"/>
    </location>
    <ligand>
        <name>Zn(2+)</name>
        <dbReference type="ChEBI" id="CHEBI:29105"/>
    </ligand>
</feature>
<accession>Q2W1D9</accession>